<organism>
    <name type="scientific">Yersinia pestis (strain Pestoides F)</name>
    <dbReference type="NCBI Taxonomy" id="386656"/>
    <lineage>
        <taxon>Bacteria</taxon>
        <taxon>Pseudomonadati</taxon>
        <taxon>Pseudomonadota</taxon>
        <taxon>Gammaproteobacteria</taxon>
        <taxon>Enterobacterales</taxon>
        <taxon>Yersiniaceae</taxon>
        <taxon>Yersinia</taxon>
    </lineage>
</organism>
<gene>
    <name evidence="1" type="primary">dxr</name>
    <name type="ordered locus">YPDSF_1664</name>
</gene>
<proteinExistence type="inferred from homology"/>
<keyword id="KW-0414">Isoprene biosynthesis</keyword>
<keyword id="KW-0464">Manganese</keyword>
<keyword id="KW-0479">Metal-binding</keyword>
<keyword id="KW-0521">NADP</keyword>
<keyword id="KW-0560">Oxidoreductase</keyword>
<sequence length="398" mass="43115">MKQLTILGSTGSIGNSTLSVVRANPELFKVTALVAGRNVREMAQQCLEFSPRYAAMSDEHSAKSLRLLLAEQGSDTEVYSGETAACELAALDDVDQVMAAIVGIAGLPSTLAAIRAGKQVLLANKESLITCGKLFMDEVKRSRAQLLPIDSEHNAIFQSLPERIQRQLGYSSLNENGVSRIILTGSGGPFRETPLSQFSDVTPDQACAHPNWSMGRKISVDSATMMNKGLEYIEARWLFNASAEQIEVVLHPQSVIHSMVRYHDGSILAQMGTPDMRTPIAHAMAYPMRVSSGVAPLDFCKVGALTFTTPDYQRYPCLKLAIDACNAGQAATTALNAANEISVMAFLDSKIRFTDIEVINRTVVEGLLLSEPTSVEEVLVIDRKARDVAAQVIAKLNN</sequence>
<feature type="chain" id="PRO_1000020328" description="1-deoxy-D-xylulose 5-phosphate reductoisomerase">
    <location>
        <begin position="1"/>
        <end position="398"/>
    </location>
</feature>
<feature type="binding site" evidence="1">
    <location>
        <position position="10"/>
    </location>
    <ligand>
        <name>NADPH</name>
        <dbReference type="ChEBI" id="CHEBI:57783"/>
    </ligand>
</feature>
<feature type="binding site" evidence="1">
    <location>
        <position position="11"/>
    </location>
    <ligand>
        <name>NADPH</name>
        <dbReference type="ChEBI" id="CHEBI:57783"/>
    </ligand>
</feature>
<feature type="binding site" evidence="1">
    <location>
        <position position="12"/>
    </location>
    <ligand>
        <name>NADPH</name>
        <dbReference type="ChEBI" id="CHEBI:57783"/>
    </ligand>
</feature>
<feature type="binding site" evidence="1">
    <location>
        <position position="13"/>
    </location>
    <ligand>
        <name>NADPH</name>
        <dbReference type="ChEBI" id="CHEBI:57783"/>
    </ligand>
</feature>
<feature type="binding site" evidence="1">
    <location>
        <position position="36"/>
    </location>
    <ligand>
        <name>NADPH</name>
        <dbReference type="ChEBI" id="CHEBI:57783"/>
    </ligand>
</feature>
<feature type="binding site" evidence="1">
    <location>
        <position position="37"/>
    </location>
    <ligand>
        <name>NADPH</name>
        <dbReference type="ChEBI" id="CHEBI:57783"/>
    </ligand>
</feature>
<feature type="binding site" evidence="1">
    <location>
        <position position="38"/>
    </location>
    <ligand>
        <name>NADPH</name>
        <dbReference type="ChEBI" id="CHEBI:57783"/>
    </ligand>
</feature>
<feature type="binding site" evidence="1">
    <location>
        <position position="124"/>
    </location>
    <ligand>
        <name>NADPH</name>
        <dbReference type="ChEBI" id="CHEBI:57783"/>
    </ligand>
</feature>
<feature type="binding site" evidence="1">
    <location>
        <position position="125"/>
    </location>
    <ligand>
        <name>1-deoxy-D-xylulose 5-phosphate</name>
        <dbReference type="ChEBI" id="CHEBI:57792"/>
    </ligand>
</feature>
<feature type="binding site" evidence="1">
    <location>
        <position position="126"/>
    </location>
    <ligand>
        <name>NADPH</name>
        <dbReference type="ChEBI" id="CHEBI:57783"/>
    </ligand>
</feature>
<feature type="binding site" evidence="1">
    <location>
        <position position="150"/>
    </location>
    <ligand>
        <name>Mn(2+)</name>
        <dbReference type="ChEBI" id="CHEBI:29035"/>
    </ligand>
</feature>
<feature type="binding site" evidence="1">
    <location>
        <position position="151"/>
    </location>
    <ligand>
        <name>1-deoxy-D-xylulose 5-phosphate</name>
        <dbReference type="ChEBI" id="CHEBI:57792"/>
    </ligand>
</feature>
<feature type="binding site" evidence="1">
    <location>
        <position position="152"/>
    </location>
    <ligand>
        <name>1-deoxy-D-xylulose 5-phosphate</name>
        <dbReference type="ChEBI" id="CHEBI:57792"/>
    </ligand>
</feature>
<feature type="binding site" evidence="1">
    <location>
        <position position="152"/>
    </location>
    <ligand>
        <name>Mn(2+)</name>
        <dbReference type="ChEBI" id="CHEBI:29035"/>
    </ligand>
</feature>
<feature type="binding site" evidence="1">
    <location>
        <position position="186"/>
    </location>
    <ligand>
        <name>1-deoxy-D-xylulose 5-phosphate</name>
        <dbReference type="ChEBI" id="CHEBI:57792"/>
    </ligand>
</feature>
<feature type="binding site" evidence="1">
    <location>
        <position position="209"/>
    </location>
    <ligand>
        <name>1-deoxy-D-xylulose 5-phosphate</name>
        <dbReference type="ChEBI" id="CHEBI:57792"/>
    </ligand>
</feature>
<feature type="binding site" evidence="1">
    <location>
        <position position="215"/>
    </location>
    <ligand>
        <name>NADPH</name>
        <dbReference type="ChEBI" id="CHEBI:57783"/>
    </ligand>
</feature>
<feature type="binding site" evidence="1">
    <location>
        <position position="222"/>
    </location>
    <ligand>
        <name>1-deoxy-D-xylulose 5-phosphate</name>
        <dbReference type="ChEBI" id="CHEBI:57792"/>
    </ligand>
</feature>
<feature type="binding site" evidence="1">
    <location>
        <position position="227"/>
    </location>
    <ligand>
        <name>1-deoxy-D-xylulose 5-phosphate</name>
        <dbReference type="ChEBI" id="CHEBI:57792"/>
    </ligand>
</feature>
<feature type="binding site" evidence="1">
    <location>
        <position position="228"/>
    </location>
    <ligand>
        <name>1-deoxy-D-xylulose 5-phosphate</name>
        <dbReference type="ChEBI" id="CHEBI:57792"/>
    </ligand>
</feature>
<feature type="binding site" evidence="1">
    <location>
        <position position="231"/>
    </location>
    <ligand>
        <name>1-deoxy-D-xylulose 5-phosphate</name>
        <dbReference type="ChEBI" id="CHEBI:57792"/>
    </ligand>
</feature>
<feature type="binding site" evidence="1">
    <location>
        <position position="231"/>
    </location>
    <ligand>
        <name>Mn(2+)</name>
        <dbReference type="ChEBI" id="CHEBI:29035"/>
    </ligand>
</feature>
<name>DXR_YERPP</name>
<comment type="function">
    <text evidence="1">Catalyzes the NADPH-dependent rearrangement and reduction of 1-deoxy-D-xylulose-5-phosphate (DXP) to 2-C-methyl-D-erythritol 4-phosphate (MEP).</text>
</comment>
<comment type="catalytic activity">
    <reaction evidence="1">
        <text>2-C-methyl-D-erythritol 4-phosphate + NADP(+) = 1-deoxy-D-xylulose 5-phosphate + NADPH + H(+)</text>
        <dbReference type="Rhea" id="RHEA:13717"/>
        <dbReference type="ChEBI" id="CHEBI:15378"/>
        <dbReference type="ChEBI" id="CHEBI:57783"/>
        <dbReference type="ChEBI" id="CHEBI:57792"/>
        <dbReference type="ChEBI" id="CHEBI:58262"/>
        <dbReference type="ChEBI" id="CHEBI:58349"/>
        <dbReference type="EC" id="1.1.1.267"/>
    </reaction>
    <physiologicalReaction direction="right-to-left" evidence="1">
        <dbReference type="Rhea" id="RHEA:13719"/>
    </physiologicalReaction>
</comment>
<comment type="cofactor">
    <cofactor evidence="1">
        <name>Mg(2+)</name>
        <dbReference type="ChEBI" id="CHEBI:18420"/>
    </cofactor>
    <cofactor evidence="1">
        <name>Mn(2+)</name>
        <dbReference type="ChEBI" id="CHEBI:29035"/>
    </cofactor>
</comment>
<comment type="pathway">
    <text evidence="1">Isoprenoid biosynthesis; isopentenyl diphosphate biosynthesis via DXP pathway; isopentenyl diphosphate from 1-deoxy-D-xylulose 5-phosphate: step 1/6.</text>
</comment>
<comment type="subunit">
    <text evidence="1">Homodimer.</text>
</comment>
<comment type="similarity">
    <text evidence="1">Belongs to the DXR family.</text>
</comment>
<evidence type="ECO:0000255" key="1">
    <source>
        <dbReference type="HAMAP-Rule" id="MF_00183"/>
    </source>
</evidence>
<protein>
    <recommendedName>
        <fullName evidence="1">1-deoxy-D-xylulose 5-phosphate reductoisomerase</fullName>
        <shortName evidence="1">DXP reductoisomerase</shortName>
        <ecNumber evidence="1">1.1.1.267</ecNumber>
    </recommendedName>
    <alternativeName>
        <fullName evidence="1">1-deoxyxylulose-5-phosphate reductoisomerase</fullName>
    </alternativeName>
    <alternativeName>
        <fullName evidence="1">2-C-methyl-D-erythritol 4-phosphate synthase</fullName>
    </alternativeName>
</protein>
<dbReference type="EC" id="1.1.1.267" evidence="1"/>
<dbReference type="EMBL" id="CP000668">
    <property type="protein sequence ID" value="ABP40049.1"/>
    <property type="molecule type" value="Genomic_DNA"/>
</dbReference>
<dbReference type="SMR" id="A4TL87"/>
<dbReference type="KEGG" id="ypp:YPDSF_1664"/>
<dbReference type="PATRIC" id="fig|386656.14.peg.2098"/>
<dbReference type="UniPathway" id="UPA00056">
    <property type="reaction ID" value="UER00092"/>
</dbReference>
<dbReference type="GO" id="GO:0030604">
    <property type="term" value="F:1-deoxy-D-xylulose-5-phosphate reductoisomerase activity"/>
    <property type="evidence" value="ECO:0007669"/>
    <property type="project" value="UniProtKB-UniRule"/>
</dbReference>
<dbReference type="GO" id="GO:0030145">
    <property type="term" value="F:manganese ion binding"/>
    <property type="evidence" value="ECO:0007669"/>
    <property type="project" value="TreeGrafter"/>
</dbReference>
<dbReference type="GO" id="GO:0070402">
    <property type="term" value="F:NADPH binding"/>
    <property type="evidence" value="ECO:0007669"/>
    <property type="project" value="InterPro"/>
</dbReference>
<dbReference type="GO" id="GO:0051484">
    <property type="term" value="P:isopentenyl diphosphate biosynthetic process, methylerythritol 4-phosphate pathway involved in terpenoid biosynthetic process"/>
    <property type="evidence" value="ECO:0007669"/>
    <property type="project" value="TreeGrafter"/>
</dbReference>
<dbReference type="FunFam" id="1.10.1740.10:FF:000004">
    <property type="entry name" value="1-deoxy-D-xylulose 5-phosphate reductoisomerase"/>
    <property type="match status" value="1"/>
</dbReference>
<dbReference type="FunFam" id="3.40.50.720:FF:000045">
    <property type="entry name" value="1-deoxy-D-xylulose 5-phosphate reductoisomerase"/>
    <property type="match status" value="1"/>
</dbReference>
<dbReference type="Gene3D" id="1.10.1740.10">
    <property type="match status" value="1"/>
</dbReference>
<dbReference type="Gene3D" id="3.40.50.720">
    <property type="entry name" value="NAD(P)-binding Rossmann-like Domain"/>
    <property type="match status" value="1"/>
</dbReference>
<dbReference type="HAMAP" id="MF_00183">
    <property type="entry name" value="DXP_reductoisom"/>
    <property type="match status" value="1"/>
</dbReference>
<dbReference type="InterPro" id="IPR003821">
    <property type="entry name" value="DXP_reductoisomerase"/>
</dbReference>
<dbReference type="InterPro" id="IPR013644">
    <property type="entry name" value="DXP_reductoisomerase_C"/>
</dbReference>
<dbReference type="InterPro" id="IPR013512">
    <property type="entry name" value="DXP_reductoisomerase_N"/>
</dbReference>
<dbReference type="InterPro" id="IPR026877">
    <property type="entry name" value="DXPR_C"/>
</dbReference>
<dbReference type="InterPro" id="IPR036169">
    <property type="entry name" value="DXPR_C_sf"/>
</dbReference>
<dbReference type="InterPro" id="IPR036291">
    <property type="entry name" value="NAD(P)-bd_dom_sf"/>
</dbReference>
<dbReference type="NCBIfam" id="TIGR00243">
    <property type="entry name" value="Dxr"/>
    <property type="match status" value="1"/>
</dbReference>
<dbReference type="NCBIfam" id="NF003938">
    <property type="entry name" value="PRK05447.1-1"/>
    <property type="match status" value="1"/>
</dbReference>
<dbReference type="NCBIfam" id="NF009114">
    <property type="entry name" value="PRK12464.1"/>
    <property type="match status" value="1"/>
</dbReference>
<dbReference type="PANTHER" id="PTHR30525">
    <property type="entry name" value="1-DEOXY-D-XYLULOSE 5-PHOSPHATE REDUCTOISOMERASE"/>
    <property type="match status" value="1"/>
</dbReference>
<dbReference type="PANTHER" id="PTHR30525:SF0">
    <property type="entry name" value="1-DEOXY-D-XYLULOSE 5-PHOSPHATE REDUCTOISOMERASE, CHLOROPLASTIC"/>
    <property type="match status" value="1"/>
</dbReference>
<dbReference type="Pfam" id="PF08436">
    <property type="entry name" value="DXP_redisom_C"/>
    <property type="match status" value="1"/>
</dbReference>
<dbReference type="Pfam" id="PF02670">
    <property type="entry name" value="DXP_reductoisom"/>
    <property type="match status" value="1"/>
</dbReference>
<dbReference type="Pfam" id="PF13288">
    <property type="entry name" value="DXPR_C"/>
    <property type="match status" value="1"/>
</dbReference>
<dbReference type="PIRSF" id="PIRSF006205">
    <property type="entry name" value="Dxp_reductismrs"/>
    <property type="match status" value="1"/>
</dbReference>
<dbReference type="SUPFAM" id="SSF69055">
    <property type="entry name" value="1-deoxy-D-xylulose-5-phosphate reductoisomerase, C-terminal domain"/>
    <property type="match status" value="1"/>
</dbReference>
<dbReference type="SUPFAM" id="SSF55347">
    <property type="entry name" value="Glyceraldehyde-3-phosphate dehydrogenase-like, C-terminal domain"/>
    <property type="match status" value="1"/>
</dbReference>
<dbReference type="SUPFAM" id="SSF51735">
    <property type="entry name" value="NAD(P)-binding Rossmann-fold domains"/>
    <property type="match status" value="1"/>
</dbReference>
<accession>A4TL87</accession>
<reference key="1">
    <citation type="submission" date="2007-02" db="EMBL/GenBank/DDBJ databases">
        <title>Complete sequence of chromosome of Yersinia pestis Pestoides F.</title>
        <authorList>
            <consortium name="US DOE Joint Genome Institute"/>
            <person name="Copeland A."/>
            <person name="Lucas S."/>
            <person name="Lapidus A."/>
            <person name="Barry K."/>
            <person name="Detter J.C."/>
            <person name="Glavina del Rio T."/>
            <person name="Hammon N."/>
            <person name="Israni S."/>
            <person name="Dalin E."/>
            <person name="Tice H."/>
            <person name="Pitluck S."/>
            <person name="Di Bartolo G."/>
            <person name="Chain P."/>
            <person name="Malfatti S."/>
            <person name="Shin M."/>
            <person name="Vergez L."/>
            <person name="Schmutz J."/>
            <person name="Larimer F."/>
            <person name="Land M."/>
            <person name="Hauser L."/>
            <person name="Worsham P."/>
            <person name="Chu M."/>
            <person name="Bearden S."/>
            <person name="Garcia E."/>
            <person name="Richardson P."/>
        </authorList>
    </citation>
    <scope>NUCLEOTIDE SEQUENCE [LARGE SCALE GENOMIC DNA]</scope>
    <source>
        <strain>Pestoides F</strain>
    </source>
</reference>